<evidence type="ECO:0000250" key="1"/>
<evidence type="ECO:0000255" key="2">
    <source>
        <dbReference type="PROSITE-ProRule" id="PRU10110"/>
    </source>
</evidence>
<evidence type="ECO:0000305" key="3"/>
<organism>
    <name type="scientific">Pichia kudriavzevii</name>
    <name type="common">Yeast</name>
    <name type="synonym">Issatchenkia orientalis</name>
    <dbReference type="NCBI Taxonomy" id="4909"/>
    <lineage>
        <taxon>Eukaryota</taxon>
        <taxon>Fungi</taxon>
        <taxon>Dikarya</taxon>
        <taxon>Ascomycota</taxon>
        <taxon>Saccharomycotina</taxon>
        <taxon>Pichiomycetes</taxon>
        <taxon>Pichiales</taxon>
        <taxon>Pichiaceae</taxon>
        <taxon>Pichia</taxon>
    </lineage>
</organism>
<accession>Q6IUR4</accession>
<protein>
    <recommendedName>
        <fullName>Orotidine 5'-phosphate decarboxylase</fullName>
        <ecNumber>4.1.1.23</ecNumber>
    </recommendedName>
    <alternativeName>
        <fullName>OMP decarboxylase</fullName>
        <shortName>OMPDCase</shortName>
        <shortName>OMPdecase</shortName>
    </alternativeName>
    <alternativeName>
        <fullName>Uridine 5'-monophosphate synthase</fullName>
        <shortName>UMP synthase</shortName>
    </alternativeName>
</protein>
<sequence length="262" mass="29130">MASYKERSESHTSPVARRLFSIMEEKKSNLCASLDITETEKLLSILDTIGPYICLVKTHIDIVSDFTYEGTVLPLKELAKKHNFMIFEDRKFADIGNTVKNQYKSGVFRIAEWADITNAHGVTGAGIVSGLKEAAQETTSEPRGLLMLAELSSKGSLAYGEYTEKTVEIAKSDKEFVIGFIAQHDMGGREEGFDWIIMTPGVGLDDKGDALGQQYRTVDEVVKTGTDIIIVGRGLYGQGRDPIEQAKRYQQAGWNAYLNRFK</sequence>
<proteinExistence type="evidence at transcript level"/>
<feature type="chain" id="PRO_0000134650" description="Orotidine 5'-phosphate decarboxylase">
    <location>
        <begin position="1"/>
        <end position="262"/>
    </location>
</feature>
<feature type="active site" description="Proton donor" evidence="2">
    <location>
        <position position="91"/>
    </location>
</feature>
<feature type="binding site" evidence="1">
    <location>
        <position position="35"/>
    </location>
    <ligand>
        <name>substrate</name>
    </ligand>
</feature>
<feature type="binding site" evidence="1">
    <location>
        <begin position="57"/>
        <end position="59"/>
    </location>
    <ligand>
        <name>substrate</name>
    </ligand>
</feature>
<feature type="binding site" evidence="1">
    <location>
        <begin position="89"/>
        <end position="98"/>
    </location>
    <ligand>
        <name>substrate</name>
    </ligand>
</feature>
<feature type="binding site" evidence="1">
    <location>
        <position position="215"/>
    </location>
    <ligand>
        <name>substrate</name>
    </ligand>
</feature>
<feature type="binding site" evidence="1">
    <location>
        <position position="233"/>
    </location>
    <ligand>
        <name>substrate</name>
    </ligand>
</feature>
<gene>
    <name type="primary">URA3</name>
</gene>
<reference key="1">
    <citation type="submission" date="2004-05" db="EMBL/GenBank/DDBJ databases">
        <title>Isolation and sequence analysis of the gene URA3 encoding the orotidine-5'-monophosphate decarboxylase from the yeast Candida glycerinogenes.</title>
        <authorList>
            <person name="Li Y."/>
            <person name="Shen W."/>
            <person name="Rao Z."/>
            <person name="Fang H."/>
            <person name="Zhuge J."/>
        </authorList>
    </citation>
    <scope>NUCLEOTIDE SEQUENCE [MRNA]</scope>
</reference>
<keyword id="KW-0210">Decarboxylase</keyword>
<keyword id="KW-0456">Lyase</keyword>
<keyword id="KW-0665">Pyrimidine biosynthesis</keyword>
<comment type="catalytic activity">
    <reaction evidence="2">
        <text>orotidine 5'-phosphate + H(+) = UMP + CO2</text>
        <dbReference type="Rhea" id="RHEA:11596"/>
        <dbReference type="ChEBI" id="CHEBI:15378"/>
        <dbReference type="ChEBI" id="CHEBI:16526"/>
        <dbReference type="ChEBI" id="CHEBI:57538"/>
        <dbReference type="ChEBI" id="CHEBI:57865"/>
        <dbReference type="EC" id="4.1.1.23"/>
    </reaction>
</comment>
<comment type="pathway">
    <text>Pyrimidine metabolism; UMP biosynthesis via de novo pathway; UMP from orotate: step 2/2.</text>
</comment>
<comment type="similarity">
    <text evidence="3">Belongs to the OMP decarboxylase family.</text>
</comment>
<name>PYRF_PICKU</name>
<dbReference type="EC" id="4.1.1.23"/>
<dbReference type="EMBL" id="AY623794">
    <property type="protein sequence ID" value="AAT39474.1"/>
    <property type="molecule type" value="mRNA"/>
</dbReference>
<dbReference type="SMR" id="Q6IUR4"/>
<dbReference type="VEuPathDB" id="FungiDB:C5L36_0B05730"/>
<dbReference type="OrthoDB" id="10263753at2759"/>
<dbReference type="UniPathway" id="UPA00070">
    <property type="reaction ID" value="UER00120"/>
</dbReference>
<dbReference type="GO" id="GO:0005829">
    <property type="term" value="C:cytosol"/>
    <property type="evidence" value="ECO:0007669"/>
    <property type="project" value="EnsemblFungi"/>
</dbReference>
<dbReference type="GO" id="GO:0004590">
    <property type="term" value="F:orotidine-5'-phosphate decarboxylase activity"/>
    <property type="evidence" value="ECO:0007669"/>
    <property type="project" value="UniProtKB-EC"/>
</dbReference>
<dbReference type="GO" id="GO:0006207">
    <property type="term" value="P:'de novo' pyrimidine nucleobase biosynthetic process"/>
    <property type="evidence" value="ECO:0007669"/>
    <property type="project" value="EnsemblFungi"/>
</dbReference>
<dbReference type="GO" id="GO:0044205">
    <property type="term" value="P:'de novo' UMP biosynthetic process"/>
    <property type="evidence" value="ECO:0007669"/>
    <property type="project" value="UniProtKB-UniPathway"/>
</dbReference>
<dbReference type="CDD" id="cd04725">
    <property type="entry name" value="OMP_decarboxylase_like"/>
    <property type="match status" value="1"/>
</dbReference>
<dbReference type="FunFam" id="3.20.20.70:FF:000114">
    <property type="entry name" value="Decarboxylase,orotidine phosphate"/>
    <property type="match status" value="1"/>
</dbReference>
<dbReference type="Gene3D" id="3.20.20.70">
    <property type="entry name" value="Aldolase class I"/>
    <property type="match status" value="1"/>
</dbReference>
<dbReference type="InterPro" id="IPR013785">
    <property type="entry name" value="Aldolase_TIM"/>
</dbReference>
<dbReference type="InterPro" id="IPR014732">
    <property type="entry name" value="OMPdecase"/>
</dbReference>
<dbReference type="InterPro" id="IPR018089">
    <property type="entry name" value="OMPdecase_AS"/>
</dbReference>
<dbReference type="InterPro" id="IPR001754">
    <property type="entry name" value="OMPdeCOase_dom"/>
</dbReference>
<dbReference type="InterPro" id="IPR011060">
    <property type="entry name" value="RibuloseP-bd_barrel"/>
</dbReference>
<dbReference type="NCBIfam" id="TIGR01740">
    <property type="entry name" value="pyrF"/>
    <property type="match status" value="1"/>
</dbReference>
<dbReference type="PANTHER" id="PTHR32119">
    <property type="entry name" value="OROTIDINE 5'-PHOSPHATE DECARBOXYLASE"/>
    <property type="match status" value="1"/>
</dbReference>
<dbReference type="PANTHER" id="PTHR32119:SF2">
    <property type="entry name" value="OROTIDINE 5'-PHOSPHATE DECARBOXYLASE"/>
    <property type="match status" value="1"/>
</dbReference>
<dbReference type="Pfam" id="PF00215">
    <property type="entry name" value="OMPdecase"/>
    <property type="match status" value="1"/>
</dbReference>
<dbReference type="SMART" id="SM00934">
    <property type="entry name" value="OMPdecase"/>
    <property type="match status" value="1"/>
</dbReference>
<dbReference type="SUPFAM" id="SSF51366">
    <property type="entry name" value="Ribulose-phoshate binding barrel"/>
    <property type="match status" value="1"/>
</dbReference>
<dbReference type="PROSITE" id="PS00156">
    <property type="entry name" value="OMPDECASE"/>
    <property type="match status" value="1"/>
</dbReference>